<evidence type="ECO:0000250" key="1">
    <source>
        <dbReference type="UniProtKB" id="Q6QNY1"/>
    </source>
</evidence>
<evidence type="ECO:0000250" key="2">
    <source>
        <dbReference type="UniProtKB" id="Q9CWG9"/>
    </source>
</evidence>
<evidence type="ECO:0000255" key="3"/>
<evidence type="ECO:0000256" key="4">
    <source>
        <dbReference type="SAM" id="MobiDB-lite"/>
    </source>
</evidence>
<evidence type="ECO:0000305" key="5"/>
<proteinExistence type="evidence at transcript level"/>
<protein>
    <recommendedName>
        <fullName>Biogenesis of lysosome-related organelles complex 1 subunit 2</fullName>
        <shortName>BLOC-1 subunit 2</shortName>
    </recommendedName>
</protein>
<accession>Q4R7C8</accession>
<sequence length="142" mass="16020">MAAAAEGVLATRRDESARDDAAVETAEEAKEPAEADITELCRDMFSKMATYLTGELTATSEDYKLLENMNKLTSLKYLEMKDIAINISRNLKDLNQKYAGLQPYLDQINVIEEQVAALEQAAYKLDAYSKKLEAKYKKLEKR</sequence>
<keyword id="KW-0007">Acetylation</keyword>
<keyword id="KW-0175">Coiled coil</keyword>
<keyword id="KW-0963">Cytoplasm</keyword>
<keyword id="KW-0206">Cytoskeleton</keyword>
<keyword id="KW-0458">Lysosome</keyword>
<keyword id="KW-0472">Membrane</keyword>
<keyword id="KW-1185">Reference proteome</keyword>
<feature type="initiator methionine" description="Removed" evidence="1">
    <location>
        <position position="1"/>
    </location>
</feature>
<feature type="chain" id="PRO_0000234544" description="Biogenesis of lysosome-related organelles complex 1 subunit 2">
    <location>
        <begin position="2"/>
        <end position="142"/>
    </location>
</feature>
<feature type="region of interest" description="Disordered" evidence="4">
    <location>
        <begin position="1"/>
        <end position="33"/>
    </location>
</feature>
<feature type="coiled-coil region" evidence="3">
    <location>
        <begin position="79"/>
        <end position="127"/>
    </location>
</feature>
<feature type="compositionally biased region" description="Basic and acidic residues" evidence="4">
    <location>
        <begin position="11"/>
        <end position="33"/>
    </location>
</feature>
<feature type="modified residue" description="N-acetylalanine" evidence="1">
    <location>
        <position position="2"/>
    </location>
</feature>
<gene>
    <name type="primary">BLOC1S2</name>
    <name type="ORF">QtsA-15578</name>
</gene>
<comment type="function">
    <text evidence="1 2">Component of the BLOC-1 complex, a complex that is required for normal biogenesis of lysosome-related organelles (LRO), such as platelet dense granules and melanosomes. In concert with the AP-3 complex, the BLOC-1 complex is required to target membrane protein cargos into vesicles assembled at cell bodies for delivery into neurites and nerve terminals. The BLOC-1 complex, in association with SNARE proteins, is also proposed to be involved in neurite extension. As part of the BORC complex may play a role in lysosomes movement and localization at the cell periphery. Associated with the cytosolic face of lysosomes, the BORC complex may recruit ARL8B and couple lysosomes to microtubule plus-end-directed kinesin motor. May play a role in cell proliferation.</text>
</comment>
<comment type="subunit">
    <text evidence="1 2">Component of the biogenesis of lysosome-related organelles complex 1 (BLOC-1) composed of BLOC1S1, BLOC1S2, BLOC1S3, BLOC1S4, BLOC1S5, BLOC1S6, DTNBP1/BLOC1S7 and SNAPIN/BLOC1S8. Octamer composed of one copy each BLOC1S1, BLOC1S2, BLOC1S3, BLOC1S4, BLOC1S5, BLOC1S6, DTNBP1/BLOC1S7 and SNAPIN/BLOC1S8. Interacts directly with BLOC1S1, BLOC1S3, BLOC1S4, BLOC1S5 and SNAPIN. The BLOC-1 complex associates with the AP-3 protein complex and membrane protein cargos. Component of the BLOC-one-related complex (BORC) which is composed of BLOC1S1, BLOC1S2, BORCS5, BORCS6, BORCS7, BORCS8, KXD1 and SNAPIN. Interacts with gamma-tubulin. Interacts with IFT57.</text>
</comment>
<comment type="subcellular location">
    <subcellularLocation>
        <location evidence="1">Cytoplasm</location>
        <location evidence="1">Cytoskeleton</location>
        <location evidence="1">Microtubule organizing center</location>
        <location evidence="1">Centrosome</location>
    </subcellularLocation>
    <subcellularLocation>
        <location evidence="1">Lysosome membrane</location>
    </subcellularLocation>
    <text evidence="1">Localizes to the centrosomes in a microtubule-dependent manner.</text>
</comment>
<comment type="similarity">
    <text evidence="5">Belongs to the BLOC1S2 family.</text>
</comment>
<name>BL1S2_MACFA</name>
<reference key="1">
    <citation type="submission" date="2005-06" db="EMBL/GenBank/DDBJ databases">
        <title>DNA sequences of macaque genes expressed in brain or testis and its evolutionary implications.</title>
        <authorList>
            <consortium name="International consortium for macaque cDNA sequencing and analysis"/>
        </authorList>
    </citation>
    <scope>NUCLEOTIDE SEQUENCE [LARGE SCALE MRNA]</scope>
    <source>
        <tissue>Testis</tissue>
    </source>
</reference>
<organism>
    <name type="scientific">Macaca fascicularis</name>
    <name type="common">Crab-eating macaque</name>
    <name type="synonym">Cynomolgus monkey</name>
    <dbReference type="NCBI Taxonomy" id="9541"/>
    <lineage>
        <taxon>Eukaryota</taxon>
        <taxon>Metazoa</taxon>
        <taxon>Chordata</taxon>
        <taxon>Craniata</taxon>
        <taxon>Vertebrata</taxon>
        <taxon>Euteleostomi</taxon>
        <taxon>Mammalia</taxon>
        <taxon>Eutheria</taxon>
        <taxon>Euarchontoglires</taxon>
        <taxon>Primates</taxon>
        <taxon>Haplorrhini</taxon>
        <taxon>Catarrhini</taxon>
        <taxon>Cercopithecidae</taxon>
        <taxon>Cercopithecinae</taxon>
        <taxon>Macaca</taxon>
    </lineage>
</organism>
<dbReference type="EMBL" id="AB168891">
    <property type="protein sequence ID" value="BAE00994.1"/>
    <property type="molecule type" value="mRNA"/>
</dbReference>
<dbReference type="RefSeq" id="NP_001274664.1">
    <property type="nucleotide sequence ID" value="NM_001287735.1"/>
</dbReference>
<dbReference type="RefSeq" id="XP_045217302.1">
    <property type="nucleotide sequence ID" value="XM_045361367.2"/>
</dbReference>
<dbReference type="SMR" id="Q4R7C8"/>
<dbReference type="STRING" id="9541.ENSMFAP00000006378"/>
<dbReference type="GeneID" id="102120191"/>
<dbReference type="VEuPathDB" id="HostDB:ENSMFAG00000041054"/>
<dbReference type="eggNOG" id="KOG4559">
    <property type="taxonomic scope" value="Eukaryota"/>
</dbReference>
<dbReference type="Proteomes" id="UP000233100">
    <property type="component" value="Chromosome 9"/>
</dbReference>
<dbReference type="GO" id="GO:1904115">
    <property type="term" value="C:axon cytoplasm"/>
    <property type="evidence" value="ECO:0007669"/>
    <property type="project" value="GOC"/>
</dbReference>
<dbReference type="GO" id="GO:0031083">
    <property type="term" value="C:BLOC-1 complex"/>
    <property type="evidence" value="ECO:0000250"/>
    <property type="project" value="UniProtKB"/>
</dbReference>
<dbReference type="GO" id="GO:0099078">
    <property type="term" value="C:BORC complex"/>
    <property type="evidence" value="ECO:0000250"/>
    <property type="project" value="UniProtKB"/>
</dbReference>
<dbReference type="GO" id="GO:0005813">
    <property type="term" value="C:centrosome"/>
    <property type="evidence" value="ECO:0007669"/>
    <property type="project" value="UniProtKB-SubCell"/>
</dbReference>
<dbReference type="GO" id="GO:0000930">
    <property type="term" value="C:gamma-tubulin complex"/>
    <property type="evidence" value="ECO:0007669"/>
    <property type="project" value="TreeGrafter"/>
</dbReference>
<dbReference type="GO" id="GO:0005765">
    <property type="term" value="C:lysosomal membrane"/>
    <property type="evidence" value="ECO:0007669"/>
    <property type="project" value="UniProtKB-SubCell"/>
</dbReference>
<dbReference type="GO" id="GO:0043015">
    <property type="term" value="F:gamma-tubulin binding"/>
    <property type="evidence" value="ECO:0007669"/>
    <property type="project" value="TreeGrafter"/>
</dbReference>
<dbReference type="GO" id="GO:0008089">
    <property type="term" value="P:anterograde axonal transport"/>
    <property type="evidence" value="ECO:0000250"/>
    <property type="project" value="UniProtKB"/>
</dbReference>
<dbReference type="GO" id="GO:0048490">
    <property type="term" value="P:anterograde synaptic vesicle transport"/>
    <property type="evidence" value="ECO:0000250"/>
    <property type="project" value="UniProtKB"/>
</dbReference>
<dbReference type="GO" id="GO:0016197">
    <property type="term" value="P:endosomal transport"/>
    <property type="evidence" value="ECO:0007669"/>
    <property type="project" value="TreeGrafter"/>
</dbReference>
<dbReference type="GO" id="GO:0032418">
    <property type="term" value="P:lysosome localization"/>
    <property type="evidence" value="ECO:0000250"/>
    <property type="project" value="UniProtKB"/>
</dbReference>
<dbReference type="GO" id="GO:0031175">
    <property type="term" value="P:neuron projection development"/>
    <property type="evidence" value="ECO:0000250"/>
    <property type="project" value="UniProtKB"/>
</dbReference>
<dbReference type="InterPro" id="IPR019269">
    <property type="entry name" value="BLOC1_su2"/>
</dbReference>
<dbReference type="PANTHER" id="PTHR46479">
    <property type="entry name" value="BIOGENESIS OF LYSOSOME-RELATED ORGANELLES COMPLEX 1 SUBUNIT 2"/>
    <property type="match status" value="1"/>
</dbReference>
<dbReference type="PANTHER" id="PTHR46479:SF1">
    <property type="entry name" value="BIOGENESIS OF LYSOSOME-RELATED ORGANELLES COMPLEX 1 SUBUNIT 2"/>
    <property type="match status" value="1"/>
</dbReference>
<dbReference type="Pfam" id="PF10046">
    <property type="entry name" value="BLOC1_2"/>
    <property type="match status" value="1"/>
</dbReference>